<organism>
    <name type="scientific">Sinorhizobium fredii (strain NBRC 101917 / NGR234)</name>
    <dbReference type="NCBI Taxonomy" id="394"/>
    <lineage>
        <taxon>Bacteria</taxon>
        <taxon>Pseudomonadati</taxon>
        <taxon>Pseudomonadota</taxon>
        <taxon>Alphaproteobacteria</taxon>
        <taxon>Hyphomicrobiales</taxon>
        <taxon>Rhizobiaceae</taxon>
        <taxon>Sinorhizobium/Ensifer group</taxon>
        <taxon>Sinorhizobium</taxon>
    </lineage>
</organism>
<protein>
    <recommendedName>
        <fullName evidence="1">Ribosomal RNA small subunit methyltransferase A</fullName>
        <ecNumber evidence="1">2.1.1.182</ecNumber>
    </recommendedName>
    <alternativeName>
        <fullName evidence="1">16S rRNA (adenine(1518)-N(6)/adenine(1519)-N(6))-dimethyltransferase</fullName>
    </alternativeName>
    <alternativeName>
        <fullName evidence="1">16S rRNA dimethyladenosine transferase</fullName>
    </alternativeName>
    <alternativeName>
        <fullName evidence="1">16S rRNA dimethylase</fullName>
    </alternativeName>
    <alternativeName>
        <fullName evidence="1">S-adenosylmethionine-6-N', N'-adenosyl(rRNA) dimethyltransferase</fullName>
    </alternativeName>
</protein>
<feature type="chain" id="PRO_1000194394" description="Ribosomal RNA small subunit methyltransferase A">
    <location>
        <begin position="1"/>
        <end position="296"/>
    </location>
</feature>
<feature type="binding site" evidence="1">
    <location>
        <position position="28"/>
    </location>
    <ligand>
        <name>S-adenosyl-L-methionine</name>
        <dbReference type="ChEBI" id="CHEBI:59789"/>
    </ligand>
</feature>
<feature type="binding site" evidence="1">
    <location>
        <position position="30"/>
    </location>
    <ligand>
        <name>S-adenosyl-L-methionine</name>
        <dbReference type="ChEBI" id="CHEBI:59789"/>
    </ligand>
</feature>
<feature type="binding site" evidence="1">
    <location>
        <position position="55"/>
    </location>
    <ligand>
        <name>S-adenosyl-L-methionine</name>
        <dbReference type="ChEBI" id="CHEBI:59789"/>
    </ligand>
</feature>
<feature type="binding site" evidence="1">
    <location>
        <position position="77"/>
    </location>
    <ligand>
        <name>S-adenosyl-L-methionine</name>
        <dbReference type="ChEBI" id="CHEBI:59789"/>
    </ligand>
</feature>
<feature type="binding site" evidence="1">
    <location>
        <position position="103"/>
    </location>
    <ligand>
        <name>S-adenosyl-L-methionine</name>
        <dbReference type="ChEBI" id="CHEBI:59789"/>
    </ligand>
</feature>
<feature type="binding site" evidence="1">
    <location>
        <position position="122"/>
    </location>
    <ligand>
        <name>S-adenosyl-L-methionine</name>
        <dbReference type="ChEBI" id="CHEBI:59789"/>
    </ligand>
</feature>
<gene>
    <name evidence="1" type="primary">rsmA</name>
    <name evidence="1" type="synonym">ksgA</name>
    <name type="ordered locus">NGR_c08980</name>
</gene>
<dbReference type="EC" id="2.1.1.182" evidence="1"/>
<dbReference type="EMBL" id="CP001389">
    <property type="protein sequence ID" value="ACP24688.1"/>
    <property type="molecule type" value="Genomic_DNA"/>
</dbReference>
<dbReference type="RefSeq" id="WP_012707472.1">
    <property type="nucleotide sequence ID" value="NC_012587.1"/>
</dbReference>
<dbReference type="RefSeq" id="YP_002825441.1">
    <property type="nucleotide sequence ID" value="NC_012587.1"/>
</dbReference>
<dbReference type="SMR" id="C3M9C2"/>
<dbReference type="STRING" id="394.NGR_c08980"/>
<dbReference type="KEGG" id="rhi:NGR_c08980"/>
<dbReference type="PATRIC" id="fig|394.7.peg.3713"/>
<dbReference type="eggNOG" id="COG0030">
    <property type="taxonomic scope" value="Bacteria"/>
</dbReference>
<dbReference type="HOGENOM" id="CLU_041220_0_1_5"/>
<dbReference type="OrthoDB" id="9814755at2"/>
<dbReference type="Proteomes" id="UP000001054">
    <property type="component" value="Chromosome"/>
</dbReference>
<dbReference type="GO" id="GO:0005829">
    <property type="term" value="C:cytosol"/>
    <property type="evidence" value="ECO:0007669"/>
    <property type="project" value="TreeGrafter"/>
</dbReference>
<dbReference type="GO" id="GO:0052908">
    <property type="term" value="F:16S rRNA (adenine(1518)-N(6)/adenine(1519)-N(6))-dimethyltransferase activity"/>
    <property type="evidence" value="ECO:0007669"/>
    <property type="project" value="UniProtKB-EC"/>
</dbReference>
<dbReference type="GO" id="GO:0003723">
    <property type="term" value="F:RNA binding"/>
    <property type="evidence" value="ECO:0007669"/>
    <property type="project" value="UniProtKB-KW"/>
</dbReference>
<dbReference type="CDD" id="cd02440">
    <property type="entry name" value="AdoMet_MTases"/>
    <property type="match status" value="1"/>
</dbReference>
<dbReference type="FunFam" id="1.10.8.100:FF:000001">
    <property type="entry name" value="Ribosomal RNA small subunit methyltransferase A"/>
    <property type="match status" value="1"/>
</dbReference>
<dbReference type="Gene3D" id="1.10.8.100">
    <property type="entry name" value="Ribosomal RNA adenine dimethylase-like, domain 2"/>
    <property type="match status" value="1"/>
</dbReference>
<dbReference type="Gene3D" id="3.40.50.150">
    <property type="entry name" value="Vaccinia Virus protein VP39"/>
    <property type="match status" value="1"/>
</dbReference>
<dbReference type="HAMAP" id="MF_00607">
    <property type="entry name" value="16SrRNA_methyltr_A"/>
    <property type="match status" value="1"/>
</dbReference>
<dbReference type="InterPro" id="IPR001737">
    <property type="entry name" value="KsgA/Erm"/>
</dbReference>
<dbReference type="InterPro" id="IPR023165">
    <property type="entry name" value="rRNA_Ade_diMease-like_C"/>
</dbReference>
<dbReference type="InterPro" id="IPR020596">
    <property type="entry name" value="rRNA_Ade_Mease_Trfase_CS"/>
</dbReference>
<dbReference type="InterPro" id="IPR020598">
    <property type="entry name" value="rRNA_Ade_methylase_Trfase_N"/>
</dbReference>
<dbReference type="InterPro" id="IPR011530">
    <property type="entry name" value="rRNA_adenine_dimethylase"/>
</dbReference>
<dbReference type="InterPro" id="IPR029063">
    <property type="entry name" value="SAM-dependent_MTases_sf"/>
</dbReference>
<dbReference type="NCBIfam" id="TIGR00755">
    <property type="entry name" value="ksgA"/>
    <property type="match status" value="1"/>
</dbReference>
<dbReference type="PANTHER" id="PTHR11727">
    <property type="entry name" value="DIMETHYLADENOSINE TRANSFERASE"/>
    <property type="match status" value="1"/>
</dbReference>
<dbReference type="PANTHER" id="PTHR11727:SF7">
    <property type="entry name" value="DIMETHYLADENOSINE TRANSFERASE-RELATED"/>
    <property type="match status" value="1"/>
</dbReference>
<dbReference type="Pfam" id="PF00398">
    <property type="entry name" value="RrnaAD"/>
    <property type="match status" value="1"/>
</dbReference>
<dbReference type="SMART" id="SM00650">
    <property type="entry name" value="rADc"/>
    <property type="match status" value="1"/>
</dbReference>
<dbReference type="SUPFAM" id="SSF53335">
    <property type="entry name" value="S-adenosyl-L-methionine-dependent methyltransferases"/>
    <property type="match status" value="1"/>
</dbReference>
<dbReference type="PROSITE" id="PS01131">
    <property type="entry name" value="RRNA_A_DIMETH"/>
    <property type="match status" value="1"/>
</dbReference>
<dbReference type="PROSITE" id="PS51689">
    <property type="entry name" value="SAM_RNA_A_N6_MT"/>
    <property type="match status" value="1"/>
</dbReference>
<accession>C3M9C2</accession>
<proteinExistence type="inferred from homology"/>
<reference key="1">
    <citation type="journal article" date="2009" name="Appl. Environ. Microbiol.">
        <title>Rhizobium sp. strain NGR234 possesses a remarkable number of secretion systems.</title>
        <authorList>
            <person name="Schmeisser C."/>
            <person name="Liesegang H."/>
            <person name="Krysciak D."/>
            <person name="Bakkou N."/>
            <person name="Le Quere A."/>
            <person name="Wollherr A."/>
            <person name="Heinemeyer I."/>
            <person name="Morgenstern B."/>
            <person name="Pommerening-Roeser A."/>
            <person name="Flores M."/>
            <person name="Palacios R."/>
            <person name="Brenner S."/>
            <person name="Gottschalk G."/>
            <person name="Schmitz R.A."/>
            <person name="Broughton W.J."/>
            <person name="Perret X."/>
            <person name="Strittmatter A.W."/>
            <person name="Streit W.R."/>
        </authorList>
    </citation>
    <scope>NUCLEOTIDE SEQUENCE [LARGE SCALE GENOMIC DNA]</scope>
    <source>
        <strain>NBRC 101917 / NGR234</strain>
    </source>
</reference>
<sequence>MAALDGLPPLRDVIQRHGLDAKKALGQNFLLDLNLTQKIARTAGPLEDVTVIEVGPGPGGLTRAILALGARKVVAIERDPRCLPALAEISAHYPGRLDVVEGDALKVDFERLAEGPVRIIANLPYNVGTQLLVNWLLPERWPPFWQSMTLMIQREVGLRIVAGADDDHYGRLGVLCGWRTKARLAFDVPPQAFTPPPKVTSTVVHLEPIDNPIPCAVSALEKVTQAAFGQRRKMLRQSLKSIGGEALLGKAGIDPQRRAETLTVEEFCRLANCLLGEKVPRSGAAPLRTGFPSEDR</sequence>
<keyword id="KW-0963">Cytoplasm</keyword>
<keyword id="KW-0489">Methyltransferase</keyword>
<keyword id="KW-1185">Reference proteome</keyword>
<keyword id="KW-0694">RNA-binding</keyword>
<keyword id="KW-0698">rRNA processing</keyword>
<keyword id="KW-0949">S-adenosyl-L-methionine</keyword>
<keyword id="KW-0808">Transferase</keyword>
<name>RSMA_SINFN</name>
<evidence type="ECO:0000255" key="1">
    <source>
        <dbReference type="HAMAP-Rule" id="MF_00607"/>
    </source>
</evidence>
<comment type="function">
    <text evidence="1">Specifically dimethylates two adjacent adenosines (A1518 and A1519) in the loop of a conserved hairpin near the 3'-end of 16S rRNA in the 30S particle. May play a critical role in biogenesis of 30S subunits.</text>
</comment>
<comment type="catalytic activity">
    <reaction evidence="1">
        <text>adenosine(1518)/adenosine(1519) in 16S rRNA + 4 S-adenosyl-L-methionine = N(6)-dimethyladenosine(1518)/N(6)-dimethyladenosine(1519) in 16S rRNA + 4 S-adenosyl-L-homocysteine + 4 H(+)</text>
        <dbReference type="Rhea" id="RHEA:19609"/>
        <dbReference type="Rhea" id="RHEA-COMP:10232"/>
        <dbReference type="Rhea" id="RHEA-COMP:10233"/>
        <dbReference type="ChEBI" id="CHEBI:15378"/>
        <dbReference type="ChEBI" id="CHEBI:57856"/>
        <dbReference type="ChEBI" id="CHEBI:59789"/>
        <dbReference type="ChEBI" id="CHEBI:74411"/>
        <dbReference type="ChEBI" id="CHEBI:74493"/>
        <dbReference type="EC" id="2.1.1.182"/>
    </reaction>
</comment>
<comment type="subcellular location">
    <subcellularLocation>
        <location evidence="1">Cytoplasm</location>
    </subcellularLocation>
</comment>
<comment type="similarity">
    <text evidence="1">Belongs to the class I-like SAM-binding methyltransferase superfamily. rRNA adenine N(6)-methyltransferase family. RsmA subfamily.</text>
</comment>